<name>AZOR1_HAHCH</name>
<organism>
    <name type="scientific">Hahella chejuensis (strain KCTC 2396)</name>
    <dbReference type="NCBI Taxonomy" id="349521"/>
    <lineage>
        <taxon>Bacteria</taxon>
        <taxon>Pseudomonadati</taxon>
        <taxon>Pseudomonadota</taxon>
        <taxon>Gammaproteobacteria</taxon>
        <taxon>Oceanospirillales</taxon>
        <taxon>Hahellaceae</taxon>
        <taxon>Hahella</taxon>
    </lineage>
</organism>
<feature type="chain" id="PRO_0000245921" description="FMN-dependent NADH:quinone oxidoreductase 1">
    <location>
        <begin position="1"/>
        <end position="204"/>
    </location>
</feature>
<feature type="binding site" evidence="1">
    <location>
        <position position="14"/>
    </location>
    <ligand>
        <name>FMN</name>
        <dbReference type="ChEBI" id="CHEBI:58210"/>
    </ligand>
</feature>
<feature type="binding site" evidence="1">
    <location>
        <begin position="20"/>
        <end position="22"/>
    </location>
    <ligand>
        <name>FMN</name>
        <dbReference type="ChEBI" id="CHEBI:58210"/>
    </ligand>
</feature>
<feature type="binding site" evidence="1">
    <location>
        <begin position="99"/>
        <end position="102"/>
    </location>
    <ligand>
        <name>FMN</name>
        <dbReference type="ChEBI" id="CHEBI:58210"/>
    </ligand>
</feature>
<dbReference type="EC" id="1.6.5.-" evidence="1"/>
<dbReference type="EC" id="1.7.1.17" evidence="1"/>
<dbReference type="EMBL" id="CP000155">
    <property type="protein sequence ID" value="ABC28169.1"/>
    <property type="molecule type" value="Genomic_DNA"/>
</dbReference>
<dbReference type="RefSeq" id="WP_011395242.1">
    <property type="nucleotide sequence ID" value="NC_007645.1"/>
</dbReference>
<dbReference type="SMR" id="Q2SMF5"/>
<dbReference type="STRING" id="349521.HCH_01302"/>
<dbReference type="KEGG" id="hch:HCH_01302"/>
<dbReference type="eggNOG" id="COG1182">
    <property type="taxonomic scope" value="Bacteria"/>
</dbReference>
<dbReference type="HOGENOM" id="CLU_088964_0_0_6"/>
<dbReference type="OrthoDB" id="9787136at2"/>
<dbReference type="Proteomes" id="UP000000238">
    <property type="component" value="Chromosome"/>
</dbReference>
<dbReference type="GO" id="GO:0009055">
    <property type="term" value="F:electron transfer activity"/>
    <property type="evidence" value="ECO:0007669"/>
    <property type="project" value="UniProtKB-UniRule"/>
</dbReference>
<dbReference type="GO" id="GO:0010181">
    <property type="term" value="F:FMN binding"/>
    <property type="evidence" value="ECO:0007669"/>
    <property type="project" value="UniProtKB-UniRule"/>
</dbReference>
<dbReference type="GO" id="GO:0016652">
    <property type="term" value="F:oxidoreductase activity, acting on NAD(P)H as acceptor"/>
    <property type="evidence" value="ECO:0007669"/>
    <property type="project" value="UniProtKB-UniRule"/>
</dbReference>
<dbReference type="GO" id="GO:0016655">
    <property type="term" value="F:oxidoreductase activity, acting on NAD(P)H, quinone or similar compound as acceptor"/>
    <property type="evidence" value="ECO:0007669"/>
    <property type="project" value="InterPro"/>
</dbReference>
<dbReference type="Gene3D" id="3.40.50.360">
    <property type="match status" value="1"/>
</dbReference>
<dbReference type="HAMAP" id="MF_01216">
    <property type="entry name" value="Azoreductase_type1"/>
    <property type="match status" value="1"/>
</dbReference>
<dbReference type="InterPro" id="IPR003680">
    <property type="entry name" value="Flavodoxin_fold"/>
</dbReference>
<dbReference type="InterPro" id="IPR029039">
    <property type="entry name" value="Flavoprotein-like_sf"/>
</dbReference>
<dbReference type="InterPro" id="IPR050104">
    <property type="entry name" value="FMN-dep_NADH:Q_OxRdtase_AzoR1"/>
</dbReference>
<dbReference type="InterPro" id="IPR023048">
    <property type="entry name" value="NADH:quinone_OxRdtase_FMN_depd"/>
</dbReference>
<dbReference type="PANTHER" id="PTHR43741">
    <property type="entry name" value="FMN-DEPENDENT NADH-AZOREDUCTASE 1"/>
    <property type="match status" value="1"/>
</dbReference>
<dbReference type="PANTHER" id="PTHR43741:SF2">
    <property type="entry name" value="FMN-DEPENDENT NADH:QUINONE OXIDOREDUCTASE"/>
    <property type="match status" value="1"/>
</dbReference>
<dbReference type="Pfam" id="PF02525">
    <property type="entry name" value="Flavodoxin_2"/>
    <property type="match status" value="1"/>
</dbReference>
<dbReference type="SUPFAM" id="SSF52218">
    <property type="entry name" value="Flavoproteins"/>
    <property type="match status" value="1"/>
</dbReference>
<sequence>MSQPITRILKIDSSARAESSMSRKLAQQLTEQLIAANPGAEVVSRDVSGGLPFVTEEWIGASYTPADQRTEAQNQALALSDSLIEEVQAADTLVIAVPMYNFSVPATLKAYIDQICRAQVTFRYTEQGPVGLLENKKAYVVTVTGGTPVNSAADFVSAYMRQVLGFIGIKDVTFINADRIMVDPESILADAQQQIAAATEVAAA</sequence>
<protein>
    <recommendedName>
        <fullName evidence="1">FMN-dependent NADH:quinone oxidoreductase 1</fullName>
        <ecNumber evidence="1">1.6.5.-</ecNumber>
    </recommendedName>
    <alternativeName>
        <fullName evidence="1">Azo-dye reductase 1</fullName>
    </alternativeName>
    <alternativeName>
        <fullName evidence="1">FMN-dependent NADH-azo compound oxidoreductase 1</fullName>
    </alternativeName>
    <alternativeName>
        <fullName evidence="1">FMN-dependent NADH-azoreductase 1</fullName>
        <ecNumber evidence="1">1.7.1.17</ecNumber>
    </alternativeName>
</protein>
<comment type="function">
    <text evidence="1">Quinone reductase that provides resistance to thiol-specific stress caused by electrophilic quinones.</text>
</comment>
<comment type="function">
    <text evidence="1">Also exhibits azoreductase activity. Catalyzes the reductive cleavage of the azo bond in aromatic azo compounds to the corresponding amines.</text>
</comment>
<comment type="catalytic activity">
    <reaction evidence="1">
        <text>2 a quinone + NADH + H(+) = 2 a 1,4-benzosemiquinone + NAD(+)</text>
        <dbReference type="Rhea" id="RHEA:65952"/>
        <dbReference type="ChEBI" id="CHEBI:15378"/>
        <dbReference type="ChEBI" id="CHEBI:57540"/>
        <dbReference type="ChEBI" id="CHEBI:57945"/>
        <dbReference type="ChEBI" id="CHEBI:132124"/>
        <dbReference type="ChEBI" id="CHEBI:134225"/>
    </reaction>
</comment>
<comment type="catalytic activity">
    <reaction evidence="1">
        <text>N,N-dimethyl-1,4-phenylenediamine + anthranilate + 2 NAD(+) = 2-(4-dimethylaminophenyl)diazenylbenzoate + 2 NADH + 2 H(+)</text>
        <dbReference type="Rhea" id="RHEA:55872"/>
        <dbReference type="ChEBI" id="CHEBI:15378"/>
        <dbReference type="ChEBI" id="CHEBI:15783"/>
        <dbReference type="ChEBI" id="CHEBI:16567"/>
        <dbReference type="ChEBI" id="CHEBI:57540"/>
        <dbReference type="ChEBI" id="CHEBI:57945"/>
        <dbReference type="ChEBI" id="CHEBI:71579"/>
        <dbReference type="EC" id="1.7.1.17"/>
    </reaction>
</comment>
<comment type="cofactor">
    <cofactor evidence="1">
        <name>FMN</name>
        <dbReference type="ChEBI" id="CHEBI:58210"/>
    </cofactor>
    <text evidence="1">Binds 1 FMN per subunit.</text>
</comment>
<comment type="subunit">
    <text evidence="1">Homodimer.</text>
</comment>
<comment type="similarity">
    <text evidence="1">Belongs to the azoreductase type 1 family.</text>
</comment>
<reference key="1">
    <citation type="journal article" date="2005" name="Nucleic Acids Res.">
        <title>Genomic blueprint of Hahella chejuensis, a marine microbe producing an algicidal agent.</title>
        <authorList>
            <person name="Jeong H."/>
            <person name="Yim J.H."/>
            <person name="Lee C."/>
            <person name="Choi S.-H."/>
            <person name="Park Y.K."/>
            <person name="Yoon S.H."/>
            <person name="Hur C.-G."/>
            <person name="Kang H.-Y."/>
            <person name="Kim D."/>
            <person name="Lee H.H."/>
            <person name="Park K.H."/>
            <person name="Park S.-H."/>
            <person name="Park H.-S."/>
            <person name="Lee H.K."/>
            <person name="Oh T.K."/>
            <person name="Kim J.F."/>
        </authorList>
    </citation>
    <scope>NUCLEOTIDE SEQUENCE [LARGE SCALE GENOMIC DNA]</scope>
    <source>
        <strain>KCTC 2396</strain>
    </source>
</reference>
<proteinExistence type="inferred from homology"/>
<keyword id="KW-0285">Flavoprotein</keyword>
<keyword id="KW-0288">FMN</keyword>
<keyword id="KW-0520">NAD</keyword>
<keyword id="KW-0560">Oxidoreductase</keyword>
<keyword id="KW-1185">Reference proteome</keyword>
<gene>
    <name evidence="1" type="primary">azoR1</name>
    <name type="ordered locus">HCH_01302</name>
</gene>
<accession>Q2SMF5</accession>
<evidence type="ECO:0000255" key="1">
    <source>
        <dbReference type="HAMAP-Rule" id="MF_01216"/>
    </source>
</evidence>